<dbReference type="EC" id="2.4.1.144" evidence="11"/>
<dbReference type="EMBL" id="L39373">
    <property type="protein sequence ID" value="AAB71422.1"/>
    <property type="status" value="ALT_INIT"/>
    <property type="molecule type" value="Genomic_DNA"/>
</dbReference>
<dbReference type="EMBL" id="U66844">
    <property type="protein sequence ID" value="AAC53064.1"/>
    <property type="molecule type" value="Genomic_DNA"/>
</dbReference>
<dbReference type="CCDS" id="CCDS27660.1"/>
<dbReference type="PIR" id="JC4362">
    <property type="entry name" value="JC4362"/>
</dbReference>
<dbReference type="FunCoup" id="Q10470">
    <property type="interactions" value="5"/>
</dbReference>
<dbReference type="STRING" id="10090.ENSMUSP00000043077"/>
<dbReference type="CAZy" id="GT17">
    <property type="family name" value="Glycosyltransferase Family 17"/>
</dbReference>
<dbReference type="GlyCosmos" id="Q10470">
    <property type="glycosylation" value="3 sites, No reported glycans"/>
</dbReference>
<dbReference type="GlyGen" id="Q10470">
    <property type="glycosylation" value="3 sites, 1 N-linked glycan (1 site)"/>
</dbReference>
<dbReference type="iPTMnet" id="Q10470"/>
<dbReference type="PhosphoSitePlus" id="Q10470"/>
<dbReference type="jPOST" id="Q10470"/>
<dbReference type="PaxDb" id="10090-ENSMUSP00000043077"/>
<dbReference type="PeptideAtlas" id="Q10470"/>
<dbReference type="ProteomicsDB" id="292233"/>
<dbReference type="AGR" id="MGI:104532"/>
<dbReference type="MGI" id="MGI:104532">
    <property type="gene designation" value="Mgat3"/>
</dbReference>
<dbReference type="eggNOG" id="ENOG502QUBY">
    <property type="taxonomic scope" value="Eukaryota"/>
</dbReference>
<dbReference type="InParanoid" id="Q10470"/>
<dbReference type="PhylomeDB" id="Q10470"/>
<dbReference type="Reactome" id="R-MMU-975574">
    <property type="pathway name" value="Reactions specific to the hybrid N-glycan synthesis pathway"/>
</dbReference>
<dbReference type="UniPathway" id="UPA00378"/>
<dbReference type="PRO" id="PR:Q10470"/>
<dbReference type="Proteomes" id="UP000000589">
    <property type="component" value="Unplaced"/>
</dbReference>
<dbReference type="RNAct" id="Q10470">
    <property type="molecule type" value="protein"/>
</dbReference>
<dbReference type="GO" id="GO:0000139">
    <property type="term" value="C:Golgi membrane"/>
    <property type="evidence" value="ECO:0007669"/>
    <property type="project" value="UniProtKB-SubCell"/>
</dbReference>
<dbReference type="GO" id="GO:0005764">
    <property type="term" value="C:lysosome"/>
    <property type="evidence" value="ECO:0007669"/>
    <property type="project" value="GOC"/>
</dbReference>
<dbReference type="GO" id="GO:0003830">
    <property type="term" value="F:beta-1,4-mannosylglycoprotein 4-beta-N-acetylglucosaminyltransferase activity"/>
    <property type="evidence" value="ECO:0000315"/>
    <property type="project" value="MGI"/>
</dbReference>
<dbReference type="GO" id="GO:0016757">
    <property type="term" value="F:glycosyltransferase activity"/>
    <property type="evidence" value="ECO:0000314"/>
    <property type="project" value="MGI"/>
</dbReference>
<dbReference type="GO" id="GO:0050435">
    <property type="term" value="P:amyloid-beta metabolic process"/>
    <property type="evidence" value="ECO:0000315"/>
    <property type="project" value="MGI"/>
</dbReference>
<dbReference type="GO" id="GO:0034599">
    <property type="term" value="P:cellular response to oxidative stress"/>
    <property type="evidence" value="ECO:0000315"/>
    <property type="project" value="MGI"/>
</dbReference>
<dbReference type="GO" id="GO:0050890">
    <property type="term" value="P:cognition"/>
    <property type="evidence" value="ECO:0000315"/>
    <property type="project" value="MGI"/>
</dbReference>
<dbReference type="GO" id="GO:1905146">
    <property type="term" value="P:lysosomal protein catabolic process"/>
    <property type="evidence" value="ECO:0000315"/>
    <property type="project" value="MGI"/>
</dbReference>
<dbReference type="GO" id="GO:0006044">
    <property type="term" value="P:N-acetylglucosamine metabolic process"/>
    <property type="evidence" value="ECO:0000314"/>
    <property type="project" value="MGI"/>
</dbReference>
<dbReference type="GO" id="GO:1905166">
    <property type="term" value="P:negative regulation of lysosomal protein catabolic process"/>
    <property type="evidence" value="ECO:0000315"/>
    <property type="project" value="MGI"/>
</dbReference>
<dbReference type="GO" id="GO:1902966">
    <property type="term" value="P:positive regulation of protein localization to early endosome"/>
    <property type="evidence" value="ECO:0000315"/>
    <property type="project" value="MGI"/>
</dbReference>
<dbReference type="GO" id="GO:0008104">
    <property type="term" value="P:protein localization"/>
    <property type="evidence" value="ECO:0000250"/>
    <property type="project" value="UniProtKB"/>
</dbReference>
<dbReference type="GO" id="GO:1902946">
    <property type="term" value="P:protein localization to early endosome"/>
    <property type="evidence" value="ECO:0000315"/>
    <property type="project" value="MGI"/>
</dbReference>
<dbReference type="GO" id="GO:0006487">
    <property type="term" value="P:protein N-linked glycosylation"/>
    <property type="evidence" value="ECO:0000315"/>
    <property type="project" value="MGI"/>
</dbReference>
<dbReference type="GO" id="GO:0030334">
    <property type="term" value="P:regulation of cell migration"/>
    <property type="evidence" value="ECO:0000250"/>
    <property type="project" value="UniProtKB"/>
</dbReference>
<dbReference type="InterPro" id="IPR006813">
    <property type="entry name" value="Glyco_trans_17"/>
</dbReference>
<dbReference type="PANTHER" id="PTHR12224:SF0">
    <property type="entry name" value="BETA-1,4-MANNOSYL-GLYCOPROTEIN 4-BETA-N-ACETYLGLUCOSAMINYLTRANSFERASE"/>
    <property type="match status" value="1"/>
</dbReference>
<dbReference type="PANTHER" id="PTHR12224">
    <property type="entry name" value="BETA-1,4-MANNOSYL-GLYCOPROTEIN BETA-1,4-N-ACETYLGLUCOSAMINYL-TRANSFERASE"/>
    <property type="match status" value="1"/>
</dbReference>
<dbReference type="Pfam" id="PF04724">
    <property type="entry name" value="Glyco_transf_17"/>
    <property type="match status" value="1"/>
</dbReference>
<feature type="chain" id="PRO_0000188843" description="Beta-1,4-mannosyl-glycoprotein 4-beta-N-acetylglucosaminyltransferase">
    <location>
        <begin position="1"/>
        <end position="538"/>
    </location>
</feature>
<feature type="topological domain" description="Cytoplasmic" evidence="2">
    <location>
        <begin position="1"/>
        <end position="7"/>
    </location>
</feature>
<feature type="transmembrane region" description="Helical; Signal-anchor for type II membrane protein" evidence="2">
    <location>
        <begin position="8"/>
        <end position="23"/>
    </location>
</feature>
<feature type="topological domain" description="Lumenal" evidence="2">
    <location>
        <begin position="24"/>
        <end position="538"/>
    </location>
</feature>
<feature type="region of interest" description="Disordered" evidence="3">
    <location>
        <begin position="120"/>
        <end position="161"/>
    </location>
</feature>
<feature type="region of interest" description="Disordered" evidence="3">
    <location>
        <begin position="507"/>
        <end position="538"/>
    </location>
</feature>
<feature type="glycosylation site" description="N-linked (GlcNAc...) asparagine" evidence="2">
    <location>
        <position position="245"/>
    </location>
</feature>
<feature type="glycosylation site" description="N-linked (GlcNAc...) asparagine" evidence="2">
    <location>
        <position position="263"/>
    </location>
</feature>
<feature type="glycosylation site" description="N-linked (GlcNAc...) asparagine" evidence="2">
    <location>
        <position position="401"/>
    </location>
</feature>
<feature type="sequence variant" description="In strain: 129/SvJ.">
    <original>I</original>
    <variation>V</variation>
    <location>
        <position position="46"/>
    </location>
</feature>
<feature type="sequence variant" description="In strain: 129/SvJ.">
    <original>D</original>
    <variation>G</variation>
    <location>
        <position position="66"/>
    </location>
</feature>
<feature type="sequence variant" description="In strain: 129/SvJ.">
    <original>T</original>
    <variation>P</variation>
    <location>
        <position position="137"/>
    </location>
</feature>
<feature type="sequence variant" description="In strain: 129/SvJ.">
    <original>S</original>
    <variation>T</variation>
    <location>
        <position position="159"/>
    </location>
</feature>
<feature type="sequence variant" description="In strain: 129/SvJ.">
    <original>D</original>
    <variation>E</variation>
    <location>
        <position position="243"/>
    </location>
</feature>
<feature type="sequence variant" description="In strain: 129/SvJ.">
    <original>S</original>
    <variation>P</variation>
    <location>
        <position position="526"/>
    </location>
</feature>
<feature type="sequence variant" description="In strain: 129/SvJ.">
    <original>A</original>
    <variation>V</variation>
    <location>
        <position position="536"/>
    </location>
</feature>
<comment type="function">
    <text evidence="1 4 7 8">It is involved in the regulation of the biosynthesis and biological function of glycoprotein oligosaccharides. Catalyzes the addition of N-acetylglucosamine in beta 1-4 linkage to the beta-linked mannose of the trimannosyl core of N-linked sugar chains, called bisecting N-acetylglucosamine (GlcNAc). It is one of the most important enzymes involved in the regulation of the biosynthesis of glycoprotein oligosaccharides (PubMed:11986323, PubMed:25592972). The addition of this bisecting GlcNAc residue alters not only the composition, but also the conformation of the N-glycan. The introduction of the bisecting GlcNAc residue results in the suppression of further processing and elongation of N-glycans, precluding the formation of beta-1,6 GlcNAc branching, catalyzed by MGAT5 since it is unable to use the bisected oligosaccharide as a substrate (By similarity). Addition of bisecting N-acetylglucosamine to CDH1/E-cadherin modulates CDH1 cell membrane location. Inhibits NeuAc-alpha-2,3-Gal-beta-1,4-GlcNAc- formation which modulates sialylation levels and plays a role in cell migration regulation (By similarity). In brain, addition of bisecting N-acetylglucosamine to BACE1 blocks its lysosomal targeting in response to oxidative stress and further degradation which increases its location to early endosome and the APP cleavage (PubMed:25592972, PubMed:26467158).</text>
</comment>
<comment type="catalytic activity">
    <reaction evidence="11">
        <text>N(4)-{beta-D-GlcNAc-(1-&gt;2)-alpha-D-Man-(1-&gt;3)-[beta-D-GlcNAc-(1-&gt;2)-alpha-D-Man-(1-&gt;6)]-beta-D-Man-(1-&gt;4)-beta-D-GlcNAc-(1-&gt;4)-beta-D-GlcNAc}-L-asparaginyl-[protein] + UDP-N-acetyl-alpha-D-glucosamine = N(4)-{beta-D-GlcNAc-(1-&gt;2)-alpha-D-Man-(1-&gt;3)-[beta-D-GlcNAc-(1-&gt;4)]-[beta-D-GlcNAc-(1-&gt;2)-alpha-D-Man-(1-&gt;6)]-beta-D-Man-(1-&gt;4)-beta-D-GlcNAc-(1-&gt;4)-beta-D-GlcNAc}-L-asparaginyl-[protein] + UDP + H(+)</text>
        <dbReference type="Rhea" id="RHEA:15509"/>
        <dbReference type="Rhea" id="RHEA-COMP:13526"/>
        <dbReference type="Rhea" id="RHEA-COMP:14371"/>
        <dbReference type="ChEBI" id="CHEBI:15378"/>
        <dbReference type="ChEBI" id="CHEBI:57705"/>
        <dbReference type="ChEBI" id="CHEBI:58223"/>
        <dbReference type="ChEBI" id="CHEBI:60651"/>
        <dbReference type="ChEBI" id="CHEBI:139504"/>
        <dbReference type="EC" id="2.4.1.144"/>
    </reaction>
</comment>
<comment type="pathway">
    <text evidence="11">Protein modification; protein glycosylation.</text>
</comment>
<comment type="subunit">
    <text evidence="6">Interacts with MGAT4D.</text>
</comment>
<comment type="subcellular location">
    <subcellularLocation>
        <location>Golgi apparatus membrane</location>
        <topology>Single-pass type II membrane protein</topology>
    </subcellularLocation>
</comment>
<comment type="tissue specificity">
    <text evidence="4">Highly expressed in brain and kidney and to a much lesser extent in stomach, heart, intestine, uterus, testis, ovary and lung. Not present in spleen, liver and muscle. In brain, expressed in neurons of hippocampus (PubMed:11986323).</text>
</comment>
<comment type="developmental stage">
    <text evidence="4">Expressed in brain at 10.5 dpc and thereafter.</text>
</comment>
<comment type="induction">
    <text evidence="5">Expression is up-regulated by CDH1/E-cadherin-mediated cell-cell interaction.</text>
</comment>
<comment type="disruption phenotype">
    <text evidence="4 6">Knockout mice are generally healthy, fertile, and behaviorally normal (PubMed:20805325). They have altered leg clasp reflex (PubMed:11986323). They show a lack of N-glycan species with an additional bisecting N-acetylglucosamine (PubMed:11986323). Knockout mice crossed with Alzheimer disease model mice have significantly lower levels of the beta-C-terminal fragment of APP (betaCTF) and soluble APP cleaved at the beta-site (sAPPbeta) in their brains than Alzheimer disease model mice. They have markedly decreased the number of amyloid-beta plaques and ameliorated cognitive function (PubMed:20805325).</text>
</comment>
<comment type="similarity">
    <text evidence="10">Belongs to the glycosyltransferase 17 family.</text>
</comment>
<comment type="sequence caution" evidence="10">
    <conflict type="erroneous initiation">
        <sequence resource="EMBL-CDS" id="AAB71422"/>
    </conflict>
    <text>Truncated N-terminus.</text>
</comment>
<comment type="online information" name="Functional Glycomics Gateway - GTase">
    <link uri="http://www.functionalglycomics.org/glycomics/molecule/jsp/glycoEnzyme/viewGlycoEnzyme.jsp?gbpId=gt_mou_585"/>
    <text>beta-1,4-mannosyl-glycoprotein beta 1,4-GlcNAc T III (Mgat3)</text>
</comment>
<evidence type="ECO:0000250" key="1">
    <source>
        <dbReference type="UniProtKB" id="Q09327"/>
    </source>
</evidence>
<evidence type="ECO:0000255" key="2"/>
<evidence type="ECO:0000256" key="3">
    <source>
        <dbReference type="SAM" id="MobiDB-lite"/>
    </source>
</evidence>
<evidence type="ECO:0000269" key="4">
    <source>
    </source>
</evidence>
<evidence type="ECO:0000269" key="5">
    <source>
    </source>
</evidence>
<evidence type="ECO:0000269" key="6">
    <source>
    </source>
</evidence>
<evidence type="ECO:0000269" key="7">
    <source>
    </source>
</evidence>
<evidence type="ECO:0000269" key="8">
    <source>
    </source>
</evidence>
<evidence type="ECO:0000303" key="9">
    <source>
    </source>
</evidence>
<evidence type="ECO:0000305" key="10"/>
<evidence type="ECO:0000305" key="11">
    <source>
    </source>
</evidence>
<evidence type="ECO:0000312" key="12">
    <source>
        <dbReference type="MGI" id="MGI:104532"/>
    </source>
</evidence>
<gene>
    <name evidence="12" type="primary">Mgat3</name>
</gene>
<keyword id="KW-0325">Glycoprotein</keyword>
<keyword id="KW-0328">Glycosyltransferase</keyword>
<keyword id="KW-0333">Golgi apparatus</keyword>
<keyword id="KW-0472">Membrane</keyword>
<keyword id="KW-1185">Reference proteome</keyword>
<keyword id="KW-0735">Signal-anchor</keyword>
<keyword id="KW-0808">Transferase</keyword>
<keyword id="KW-0812">Transmembrane</keyword>
<keyword id="KW-1133">Transmembrane helix</keyword>
<sequence length="538" mass="62003">MKMRRYKLFLMFCMAGLCLISFLHFFKTLSYVTFPRELASLSPNLISSFFWNNAPVTPQASPEPGDPDLLRTPLYSHSPLLQPLSPSKATEELHRVDFVLPEDTTEYFVRTKAGGVCFKPGTRMLEKPSPGRTEEKTEVSEGSSARGPARRPMRHVLSSRERLGSRGTRRKWVECVCLPGWHGPSCGVPTVVQYSNLPTKERLVPREVPRRVINAININHEFDLLDVRFHELGDVVDAFVVCDSNFTAYGEPRPLKFREMLTNGTFEYIRHKVLYVFLDHFPPGGRQDGWIADDYLRTFLTQDGVSRLRNLRPDDVFIIDDADEIPARDGVLFLKLYDGWTEPFAFHMRKSLYGFFWKQPGTLEVVSGCTMDMLQAVYGLDGIRLRRRQYYTMPNFRQYENRTGHILVQWSLGSPLHFAGWHCSWCFTPEGIYFKLVSAQNGDFPRWGDYEDKRDLNYIRSLIRTGGWFDGTQQEYPPADPSEHMYAPKYLLKNYDQFRYLLENPYREPKSTVEGGRQNQGSDGRSSAVRGKLDTAEG</sequence>
<organism>
    <name type="scientific">Mus musculus</name>
    <name type="common">Mouse</name>
    <dbReference type="NCBI Taxonomy" id="10090"/>
    <lineage>
        <taxon>Eukaryota</taxon>
        <taxon>Metazoa</taxon>
        <taxon>Chordata</taxon>
        <taxon>Craniata</taxon>
        <taxon>Vertebrata</taxon>
        <taxon>Euteleostomi</taxon>
        <taxon>Mammalia</taxon>
        <taxon>Eutheria</taxon>
        <taxon>Euarchontoglires</taxon>
        <taxon>Glires</taxon>
        <taxon>Rodentia</taxon>
        <taxon>Myomorpha</taxon>
        <taxon>Muroidea</taxon>
        <taxon>Muridae</taxon>
        <taxon>Murinae</taxon>
        <taxon>Mus</taxon>
        <taxon>Mus</taxon>
    </lineage>
</organism>
<accession>Q10470</accession>
<accession>P70386</accession>
<proteinExistence type="evidence at protein level"/>
<name>MGAT3_MOUSE</name>
<reference key="1">
    <citation type="journal article" date="1995" name="Gene">
        <title>Cloning and chromosomal mapping of the mouse Mgat3 gene encoding N-acetylglucosaminyltransferase III.</title>
        <authorList>
            <person name="Bhaumik M."/>
            <person name="Seldin M.F."/>
            <person name="Stanley P."/>
        </authorList>
    </citation>
    <scope>NUCLEOTIDE SEQUENCE [GENOMIC DNA]</scope>
    <source>
        <strain>129/Sv</strain>
        <tissue>Liver</tissue>
    </source>
</reference>
<reference key="2">
    <citation type="journal article" date="1997" name="Glycobiology">
        <title>Isolation, characterization and inactivation of the mouse Mgat3 gene: the bisecting N-acetylglucosamine in asparagine-linked oligosaccharides appears dispensable for viability and reproduction.</title>
        <authorList>
            <person name="Priatel J.J."/>
            <person name="Sarkar M."/>
            <person name="Schachter H."/>
            <person name="Marth J.D."/>
        </authorList>
    </citation>
    <scope>NUCLEOTIDE SEQUENCE [GENOMIC DNA]</scope>
    <source>
        <strain>129/SvJ</strain>
        <tissue>Liver</tissue>
    </source>
</reference>
<reference key="3">
    <citation type="journal article" date="2002" name="J. Biol. Chem.">
        <title>Truncated, inactive N-acetylglucosaminyltransferase III (GlcNAc-TIII) induces neurological and other traits absent in mice that lack GlcNAc-TIII.</title>
        <authorList>
            <person name="Bhattacharyya R."/>
            <person name="Bhaumik M."/>
            <person name="Raju T.S."/>
            <person name="Stanley P."/>
        </authorList>
    </citation>
    <scope>FUNCTION</scope>
    <scope>DISRUPTION PHENOTYPE</scope>
    <scope>DEVELOPMENTAL STAGE</scope>
</reference>
<reference key="4">
    <citation type="journal article" date="2006" name="J. Biol. Chem.">
        <title>Cell-cell interaction-dependent regulation of N-acetylglucosaminyltransferase III and the bisected N-glycans in GE11 epithelial cells. Involvement of E-cadherin-mediated cell adhesion.</title>
        <authorList>
            <person name="Iijima J."/>
            <person name="Zhao Y."/>
            <person name="Isaji T."/>
            <person name="Kameyama A."/>
            <person name="Nakaya S."/>
            <person name="Wang X."/>
            <person name="Ihara H."/>
            <person name="Cheng X."/>
            <person name="Nakagawa T."/>
            <person name="Miyoshi E."/>
            <person name="Kondo A."/>
            <person name="Narimatsu H."/>
            <person name="Taniguchi N."/>
            <person name="Gu J."/>
        </authorList>
    </citation>
    <scope>INDUCTION BY CELL-CELL INTERACTION</scope>
</reference>
<reference key="5">
    <citation type="journal article" date="2010" name="J. Cell Biol.">
        <title>A testis-specific regulator of complex and hybrid N-glycan synthesis.</title>
        <authorList>
            <person name="Huang H.H."/>
            <person name="Stanley P."/>
        </authorList>
    </citation>
    <scope>INTERACTION WITH MGAT4D</scope>
</reference>
<reference key="6">
    <citation type="journal article" date="2015" name="EMBO Mol. Med.">
        <title>An aberrant sugar modification of BACE1 blocks its lysosomal targeting in Alzheimer's disease.</title>
        <authorList>
            <person name="Kizuka Y."/>
            <person name="Kitazume S."/>
            <person name="Fujinawa R."/>
            <person name="Saito T."/>
            <person name="Iwata N."/>
            <person name="Saido T.C."/>
            <person name="Nakano M."/>
            <person name="Yamaguchi Y."/>
            <person name="Hashimoto Y."/>
            <person name="Staufenbiel M."/>
            <person name="Hatsuta H."/>
            <person name="Murayama S."/>
            <person name="Manya H."/>
            <person name="Endo T."/>
            <person name="Taniguchi N."/>
        </authorList>
    </citation>
    <scope>FUNCTION</scope>
    <scope>DISRUPTION PHENOTYPE</scope>
    <scope>CATALYTIC ACTIVITY</scope>
</reference>
<reference key="7">
    <citation type="journal article" date="2016" name="Biochem. J.">
        <title>Bisecting GlcNAc modification stabilizes BACE1 protein under oxidative stress conditions.</title>
        <authorList>
            <person name="Kizuka Y."/>
            <person name="Nakano M."/>
            <person name="Kitazume S."/>
            <person name="Saito T."/>
            <person name="Saido T.C."/>
            <person name="Taniguchi N."/>
        </authorList>
    </citation>
    <scope>FUNCTION</scope>
</reference>
<protein>
    <recommendedName>
        <fullName evidence="10">Beta-1,4-mannosyl-glycoprotein 4-beta-N-acetylglucosaminyltransferase</fullName>
        <ecNumber evidence="11">2.4.1.144</ecNumber>
    </recommendedName>
    <alternativeName>
        <fullName>N-glycosyl-oligosaccharide-glycoprotein N-acetylglucosaminyltransferase III</fullName>
        <shortName evidence="9">GNT-III</shortName>
        <shortName>GlcNAc-T III</shortName>
        <shortName evidence="9">N-acetylglucosaminyltransferase III</shortName>
    </alternativeName>
</protein>